<accession>C0HK57</accession>
<keyword id="KW-0002">3D-structure</keyword>
<keyword id="KW-0066">ATP synthesis</keyword>
<keyword id="KW-0138">CF(0)</keyword>
<keyword id="KW-0903">Direct protein sequencing</keyword>
<keyword id="KW-0375">Hydrogen ion transport</keyword>
<keyword id="KW-0406">Ion transport</keyword>
<keyword id="KW-0472">Membrane</keyword>
<keyword id="KW-0496">Mitochondrion</keyword>
<keyword id="KW-0999">Mitochondrion inner membrane</keyword>
<keyword id="KW-0812">Transmembrane</keyword>
<keyword id="KW-1133">Transmembrane helix</keyword>
<keyword id="KW-0813">Transport</keyword>
<proteinExistence type="evidence at protein level"/>
<protein>
    <recommendedName>
        <fullName evidence="1">ATP synthase subunit a</fullName>
    </recommendedName>
    <alternativeName>
        <fullName evidence="1">F-ATPase protein 6</fullName>
    </alternativeName>
</protein>
<name>ATP6_PICAN</name>
<organism evidence="7">
    <name type="scientific">Pichia angusta</name>
    <name type="common">Yeast</name>
    <name type="synonym">Hansenula polymorpha</name>
    <dbReference type="NCBI Taxonomy" id="870730"/>
    <lineage>
        <taxon>Eukaryota</taxon>
        <taxon>Fungi</taxon>
        <taxon>Dikarya</taxon>
        <taxon>Ascomycota</taxon>
        <taxon>Saccharomycotina</taxon>
        <taxon>Pichiomycetes</taxon>
        <taxon>Pichiales</taxon>
        <taxon>Pichiaceae</taxon>
        <taxon>Ogataea</taxon>
    </lineage>
</organism>
<evidence type="ECO:0000250" key="1">
    <source>
        <dbReference type="UniProtKB" id="P00854"/>
    </source>
</evidence>
<evidence type="ECO:0000250" key="2">
    <source>
        <dbReference type="UniProtKB" id="Q36258"/>
    </source>
</evidence>
<evidence type="ECO:0000255" key="3"/>
<evidence type="ECO:0000269" key="4">
    <source>
    </source>
</evidence>
<evidence type="ECO:0000269" key="5">
    <source>
    </source>
</evidence>
<evidence type="ECO:0000269" key="6">
    <source ref="2"/>
</evidence>
<evidence type="ECO:0000303" key="7">
    <source>
    </source>
</evidence>
<evidence type="ECO:0000303" key="8">
    <source ref="2"/>
</evidence>
<evidence type="ECO:0000305" key="9"/>
<evidence type="ECO:0000305" key="10">
    <source>
    </source>
</evidence>
<evidence type="ECO:0007744" key="11">
    <source>
        <dbReference type="PDB" id="5LQX"/>
    </source>
</evidence>
<evidence type="ECO:0007744" key="12">
    <source>
        <dbReference type="PDB" id="5LQY"/>
    </source>
</evidence>
<evidence type="ECO:0007744" key="13">
    <source>
        <dbReference type="PDB" id="5LQZ"/>
    </source>
</evidence>
<dbReference type="PDB" id="5LQX">
    <property type="method" value="EM"/>
    <property type="resolution" value="7.90 A"/>
    <property type="chains" value="Y=8-259"/>
</dbReference>
<dbReference type="PDB" id="5LQY">
    <property type="method" value="EM"/>
    <property type="resolution" value="7.80 A"/>
    <property type="chains" value="Y=8-259"/>
</dbReference>
<dbReference type="PDB" id="5LQZ">
    <property type="method" value="EM"/>
    <property type="resolution" value="7.00 A"/>
    <property type="chains" value="Y=8-259"/>
</dbReference>
<dbReference type="PDBsum" id="5LQX"/>
<dbReference type="PDBsum" id="5LQY"/>
<dbReference type="PDBsum" id="5LQZ"/>
<dbReference type="EMDB" id="EMD-4100"/>
<dbReference type="EMDB" id="EMD-4101"/>
<dbReference type="EMDB" id="EMD-4102"/>
<dbReference type="SMR" id="C0HK57"/>
<dbReference type="GO" id="GO:0005743">
    <property type="term" value="C:mitochondrial inner membrane"/>
    <property type="evidence" value="ECO:0007669"/>
    <property type="project" value="UniProtKB-SubCell"/>
</dbReference>
<dbReference type="GO" id="GO:0045259">
    <property type="term" value="C:proton-transporting ATP synthase complex"/>
    <property type="evidence" value="ECO:0007669"/>
    <property type="project" value="UniProtKB-KW"/>
</dbReference>
<dbReference type="GO" id="GO:0046933">
    <property type="term" value="F:proton-transporting ATP synthase activity, rotational mechanism"/>
    <property type="evidence" value="ECO:0007669"/>
    <property type="project" value="TreeGrafter"/>
</dbReference>
<dbReference type="CDD" id="cd00310">
    <property type="entry name" value="ATP-synt_Fo_a_6"/>
    <property type="match status" value="1"/>
</dbReference>
<dbReference type="FunFam" id="1.20.120.220:FF:000003">
    <property type="entry name" value="ATP synthase subunit a"/>
    <property type="match status" value="1"/>
</dbReference>
<dbReference type="Gene3D" id="1.20.120.220">
    <property type="entry name" value="ATP synthase, F0 complex, subunit A"/>
    <property type="match status" value="1"/>
</dbReference>
<dbReference type="HAMAP" id="MF_01393">
    <property type="entry name" value="ATP_synth_a_bact"/>
    <property type="match status" value="1"/>
</dbReference>
<dbReference type="InterPro" id="IPR000568">
    <property type="entry name" value="ATP_synth_F0_asu"/>
</dbReference>
<dbReference type="InterPro" id="IPR023011">
    <property type="entry name" value="ATP_synth_F0_asu_AS"/>
</dbReference>
<dbReference type="InterPro" id="IPR045083">
    <property type="entry name" value="ATP_synth_F0_asu_bact/mt"/>
</dbReference>
<dbReference type="InterPro" id="IPR035908">
    <property type="entry name" value="F0_ATP_A_sf"/>
</dbReference>
<dbReference type="NCBIfam" id="TIGR01131">
    <property type="entry name" value="ATP_synt_6_or_A"/>
    <property type="match status" value="1"/>
</dbReference>
<dbReference type="PANTHER" id="PTHR11410">
    <property type="entry name" value="ATP SYNTHASE SUBUNIT A"/>
    <property type="match status" value="1"/>
</dbReference>
<dbReference type="PANTHER" id="PTHR11410:SF0">
    <property type="entry name" value="ATP SYNTHASE SUBUNIT A"/>
    <property type="match status" value="1"/>
</dbReference>
<dbReference type="Pfam" id="PF00119">
    <property type="entry name" value="ATP-synt_A"/>
    <property type="match status" value="1"/>
</dbReference>
<dbReference type="PRINTS" id="PR00123">
    <property type="entry name" value="ATPASEA"/>
</dbReference>
<dbReference type="SUPFAM" id="SSF81336">
    <property type="entry name" value="F1F0 ATP synthase subunit A"/>
    <property type="match status" value="1"/>
</dbReference>
<dbReference type="PROSITE" id="PS00449">
    <property type="entry name" value="ATPASE_A"/>
    <property type="match status" value="1"/>
</dbReference>
<feature type="propeptide" id="PRO_0000445331" description="Removed in mature form" evidence="4">
    <location>
        <begin position="1"/>
        <end position="7"/>
    </location>
</feature>
<feature type="chain" id="PRO_0000445332" description="ATP synthase subunit a" evidence="4 6">
    <location>
        <begin position="8"/>
        <end position="259"/>
    </location>
</feature>
<feature type="transmembrane region" description="Helical; Name=aH1" evidence="3">
    <location>
        <begin position="36"/>
        <end position="56"/>
    </location>
</feature>
<feature type="transmembrane region" description="Helical; Name=aH3" evidence="3">
    <location>
        <begin position="95"/>
        <end position="115"/>
    </location>
</feature>
<feature type="transmembrane region" description="Helical; Name=aH4" evidence="3">
    <location>
        <begin position="125"/>
        <end position="145"/>
    </location>
</feature>
<feature type="transmembrane region" description="Helical; Name=aH5" evidence="10">
    <location>
        <begin position="164"/>
        <end position="206"/>
    </location>
</feature>
<feature type="transmembrane region" description="Helical; Name=aH6" evidence="10">
    <location>
        <begin position="211"/>
        <end position="253"/>
    </location>
</feature>
<reference evidence="9" key="1">
    <citation type="journal article" date="2015" name="Biochem. J.">
        <title>The purification and characterization of ATP synthase complexes from the mitochondria of four fungal species.</title>
        <authorList>
            <person name="Liu S."/>
            <person name="Charlesworth T.J."/>
            <person name="Bason J.V."/>
            <person name="Montgomery M.G."/>
            <person name="Harbour M.E."/>
            <person name="Fearnley I.M."/>
            <person name="Walker J.E."/>
        </authorList>
    </citation>
    <scope>NUCLEOTIDE SEQUENCE [GENOMIC DNA]</scope>
    <scope>PROTEIN SEQUENCE OF 8-25</scope>
    <scope>IDENTIFICATION IN ATP SYNTHASE COMPLEX</scope>
    <scope>FUNCTION OF ATPASE COMPLEX</scope>
    <scope>SUBUNIT</scope>
    <scope>SUBCELLULAR LOCATION</scope>
    <scope>MASS SPECTROMETRY</scope>
    <scope>IDENTIFICATION BY MASS SPECTROMETRY</scope>
    <source>
        <strain evidence="7">A16 / NCYC 2310</strain>
    </source>
</reference>
<reference evidence="9" key="2">
    <citation type="submission" date="2016-08" db="UniProtKB">
        <authorList>
            <person name="Fearnley I.M."/>
        </authorList>
    </citation>
    <scope>PARTIAL PROTEIN SEQUENCE</scope>
    <source>
        <strain evidence="8">A16 / NCYC 2310</strain>
    </source>
</reference>
<reference evidence="11 12 13" key="3">
    <citation type="journal article" date="2016" name="Proc. Natl. Acad. Sci. U.S.A.">
        <title>Structure of the mitochondrial ATP synthase from Pichia angusta determined by electron cryo-microscopy.</title>
        <authorList>
            <person name="Vinothkumar K.R."/>
            <person name="Montgomery M.G."/>
            <person name="Liu S."/>
            <person name="Walker J.E."/>
        </authorList>
    </citation>
    <scope>STRUCTURE BY ELECTRON MICROSCOPY (7.0 ANGSTROMS) OF MONOMERIC ATP SYNTHASE COMPLEX IN COMPLEX WITH BOVINE ATPIF1</scope>
    <scope>FUNCTION</scope>
    <scope>SUBUNIT</scope>
    <scope>SUBCELLULAR LOCATION</scope>
</reference>
<comment type="function">
    <text evidence="2 4 5">Mitochondrial membrane ATP synthase (F(1)F(0) ATP synthase or Complex V) produces ATP from ADP in the presence of a proton gradient across the membrane which is generated by electron transport complexes of the respiratory chain (PubMed:25759169). F-type ATP synthases consist of two structural domains, F(1) - containing the extramembraneous catalytic core, and F(0) - containing the membrane proton channel, linked together by a central stalk and a peripheral stalk (PubMed:27791192). During catalysis, ATP synthesis in the catalytic domain of F(1) is coupled via a rotary mechanism of the central stalk subunits to proton translocation (By similarity). Key component of the proton channel; it may play a direct role in the translocation of protons across the membrane (By similarity).</text>
</comment>
<comment type="subunit">
    <text evidence="2 4 5">F-type ATP synthases have 2 components, the catalytic core F(1) and the membrane-embedded component F(0), linked together by a central stalk and a peripheral stalk (PubMed:27791192). The central stalk, also called rotor shaft, is often seen as part of F(1) (PubMed:27791192). The peripheral stalk is seen as part of F(0). F(0) contains the membrane channel next to the rotor (PubMed:27791192). F-type ATP synthases form dimers but each monomer functions independently in ATP generation (By similarity). The dimer consists of 18 different polypeptides: ATP1 (subunit alpha, part of F(1), 3 molecules per monomer), ATP2 (subunit beta, part of F(1), 3 molecules per monomer), ATP3 (subunit gamma, part of the central stalk), ATP4 (subunit b, part of the peripheral stalk), ATP5/OSCP (subunit 5/OSCP, part of the peripheral stalk), ATP6 (subunit a, part of the peripheral stalk), ATP7 (subunit d, part of the peripheral stalk), ATP8 (subunit 8, part of the peripheral stalk), OLI1 (subunit c, part of the rotor, 10 molecules per monomer), ATP14 (subunit h, part of the peripheral stalk), ATP15 (subunit epsilon, part of the central stalk), ATP16 (subunit delta, part of the central stalk), ATP17 (subunit f, part of the peripheral stalk), ATP18 (subunit i/j, part of the peripheral stalk) (PubMed:25759169, PubMed:27791192). Dimer-specific subunits are ATP19 (subunit k, at interface between monomers), ATP20 (subunit g, at interface between monomers), TIM11 (subunit e, at interface between monomers) (By similarity). Also contains subunit L (PubMed:25759169).</text>
</comment>
<comment type="subcellular location">
    <subcellularLocation>
        <location evidence="10">Mitochondrion inner membrane</location>
        <topology evidence="10">Multi-pass membrane protein</topology>
    </subcellularLocation>
    <text evidence="10">The F-type ATP synthase complex is anchored in the mitochondrial inner membrane via the F(0) domain with the F(1) domain and the peripheral stalk extending into the mitochondrial matrix.</text>
</comment>
<comment type="mass spectrometry" mass="27570.0" method="MALDI" evidence="4"/>
<comment type="similarity">
    <text evidence="9">Belongs to the ATPase A chain family.</text>
</comment>
<gene>
    <name evidence="1" type="primary">ATP6</name>
</gene>
<sequence length="259" mass="28401">MTNNYINSPLDQFIINNLLEINSPFLNLSTLNFSTFSLYTLFVVLVISLTFILSIGGESNNLVKGSNWLIAIEAIFDTILNMVKGQIGGSVYGRYVPLVYTLFTFILVANLIGMVPYNFALSASLIYIIGISVSLWIGLTILGLFLNKAVFFSLFVPSGTPLPLVPVLVLIELLSYTARAISLGLRLAANTLSGHLLMSILGNLVKNLMSINYFTFIFGLIPLAGIFAIVILEFAIACIQAYVFAILTSSYLKDSIYLH</sequence>